<proteinExistence type="inferred from homology"/>
<reference key="1">
    <citation type="journal article" date="2004" name="Proc. Natl. Acad. Sci. U.S.A.">
        <title>The complete genomic sequence of Nocardia farcinica IFM 10152.</title>
        <authorList>
            <person name="Ishikawa J."/>
            <person name="Yamashita A."/>
            <person name="Mikami Y."/>
            <person name="Hoshino Y."/>
            <person name="Kurita H."/>
            <person name="Hotta K."/>
            <person name="Shiba T."/>
            <person name="Hattori M."/>
        </authorList>
    </citation>
    <scope>NUCLEOTIDE SEQUENCE [LARGE SCALE GENOMIC DNA]</scope>
    <source>
        <strain>IFM 10152</strain>
    </source>
</reference>
<name>COX1B_NOCFA</name>
<organism>
    <name type="scientific">Nocardia farcinica (strain IFM 10152)</name>
    <dbReference type="NCBI Taxonomy" id="247156"/>
    <lineage>
        <taxon>Bacteria</taxon>
        <taxon>Bacillati</taxon>
        <taxon>Actinomycetota</taxon>
        <taxon>Actinomycetes</taxon>
        <taxon>Mycobacteriales</taxon>
        <taxon>Nocardiaceae</taxon>
        <taxon>Nocardia</taxon>
    </lineage>
</organism>
<accession>Q5Z0K2</accession>
<dbReference type="EC" id="7.1.1.9"/>
<dbReference type="EMBL" id="AP006618">
    <property type="protein sequence ID" value="BAD56039.1"/>
    <property type="molecule type" value="Genomic_DNA"/>
</dbReference>
<dbReference type="SMR" id="Q5Z0K2"/>
<dbReference type="STRING" id="247156.NFA_11940"/>
<dbReference type="GeneID" id="61132016"/>
<dbReference type="KEGG" id="nfa:NFA_11940"/>
<dbReference type="eggNOG" id="COG0843">
    <property type="taxonomic scope" value="Bacteria"/>
</dbReference>
<dbReference type="HOGENOM" id="CLU_011899_7_3_11"/>
<dbReference type="OrthoDB" id="9803294at2"/>
<dbReference type="UniPathway" id="UPA00705"/>
<dbReference type="Proteomes" id="UP000006820">
    <property type="component" value="Chromosome"/>
</dbReference>
<dbReference type="GO" id="GO:0005886">
    <property type="term" value="C:plasma membrane"/>
    <property type="evidence" value="ECO:0007669"/>
    <property type="project" value="UniProtKB-SubCell"/>
</dbReference>
<dbReference type="GO" id="GO:0004129">
    <property type="term" value="F:cytochrome-c oxidase activity"/>
    <property type="evidence" value="ECO:0007669"/>
    <property type="project" value="UniProtKB-EC"/>
</dbReference>
<dbReference type="GO" id="GO:0020037">
    <property type="term" value="F:heme binding"/>
    <property type="evidence" value="ECO:0007669"/>
    <property type="project" value="InterPro"/>
</dbReference>
<dbReference type="GO" id="GO:0046872">
    <property type="term" value="F:metal ion binding"/>
    <property type="evidence" value="ECO:0007669"/>
    <property type="project" value="UniProtKB-KW"/>
</dbReference>
<dbReference type="GO" id="GO:0015990">
    <property type="term" value="P:electron transport coupled proton transport"/>
    <property type="evidence" value="ECO:0007669"/>
    <property type="project" value="InterPro"/>
</dbReference>
<dbReference type="GO" id="GO:0006119">
    <property type="term" value="P:oxidative phosphorylation"/>
    <property type="evidence" value="ECO:0007669"/>
    <property type="project" value="UniProtKB-UniPathway"/>
</dbReference>
<dbReference type="GO" id="GO:0022904">
    <property type="term" value="P:respiratory electron transport chain"/>
    <property type="evidence" value="ECO:0007669"/>
    <property type="project" value="TreeGrafter"/>
</dbReference>
<dbReference type="CDD" id="cd01662">
    <property type="entry name" value="Ubiquinol_Oxidase_I"/>
    <property type="match status" value="1"/>
</dbReference>
<dbReference type="FunFam" id="1.20.210.10:FF:000003">
    <property type="entry name" value="Cytochrome c oxidase subunit 1"/>
    <property type="match status" value="1"/>
</dbReference>
<dbReference type="Gene3D" id="1.20.210.10">
    <property type="entry name" value="Cytochrome c oxidase-like, subunit I domain"/>
    <property type="match status" value="1"/>
</dbReference>
<dbReference type="InterPro" id="IPR023616">
    <property type="entry name" value="Cyt_c_oxase-like_su1_dom"/>
</dbReference>
<dbReference type="InterPro" id="IPR036927">
    <property type="entry name" value="Cyt_c_oxase-like_su1_sf"/>
</dbReference>
<dbReference type="InterPro" id="IPR000883">
    <property type="entry name" value="Cyt_C_Oxase_1"/>
</dbReference>
<dbReference type="InterPro" id="IPR023615">
    <property type="entry name" value="Cyt_c_Oxase_su1_BS"/>
</dbReference>
<dbReference type="InterPro" id="IPR014241">
    <property type="entry name" value="Cyt_c_oxidase_su1_bac"/>
</dbReference>
<dbReference type="NCBIfam" id="TIGR02891">
    <property type="entry name" value="CtaD_CoxA"/>
    <property type="match status" value="1"/>
</dbReference>
<dbReference type="PANTHER" id="PTHR10422">
    <property type="entry name" value="CYTOCHROME C OXIDASE SUBUNIT 1"/>
    <property type="match status" value="1"/>
</dbReference>
<dbReference type="PANTHER" id="PTHR10422:SF18">
    <property type="entry name" value="CYTOCHROME C OXIDASE SUBUNIT 1"/>
    <property type="match status" value="1"/>
</dbReference>
<dbReference type="Pfam" id="PF00115">
    <property type="entry name" value="COX1"/>
    <property type="match status" value="1"/>
</dbReference>
<dbReference type="PRINTS" id="PR01165">
    <property type="entry name" value="CYCOXIDASEI"/>
</dbReference>
<dbReference type="SUPFAM" id="SSF81442">
    <property type="entry name" value="Cytochrome c oxidase subunit I-like"/>
    <property type="match status" value="1"/>
</dbReference>
<dbReference type="PROSITE" id="PS50855">
    <property type="entry name" value="COX1"/>
    <property type="match status" value="1"/>
</dbReference>
<dbReference type="PROSITE" id="PS00077">
    <property type="entry name" value="COX1_CUB"/>
    <property type="match status" value="1"/>
</dbReference>
<evidence type="ECO:0000250" key="1"/>
<evidence type="ECO:0000255" key="2"/>
<evidence type="ECO:0000256" key="3">
    <source>
        <dbReference type="SAM" id="MobiDB-lite"/>
    </source>
</evidence>
<evidence type="ECO:0000305" key="4"/>
<keyword id="KW-1003">Cell membrane</keyword>
<keyword id="KW-0186">Copper</keyword>
<keyword id="KW-0249">Electron transport</keyword>
<keyword id="KW-0349">Heme</keyword>
<keyword id="KW-0408">Iron</keyword>
<keyword id="KW-0472">Membrane</keyword>
<keyword id="KW-0479">Metal-binding</keyword>
<keyword id="KW-1185">Reference proteome</keyword>
<keyword id="KW-0679">Respiratory chain</keyword>
<keyword id="KW-1278">Translocase</keyword>
<keyword id="KW-0812">Transmembrane</keyword>
<keyword id="KW-1133">Transmembrane helix</keyword>
<keyword id="KW-0813">Transport</keyword>
<protein>
    <recommendedName>
        <fullName>Probable cytochrome c oxidase subunit 1-beta</fullName>
        <ecNumber>7.1.1.9</ecNumber>
    </recommendedName>
    <alternativeName>
        <fullName>Cytochrome aa3 subunit 1-beta</fullName>
    </alternativeName>
    <alternativeName>
        <fullName>Cytochrome c oxidase polypeptide I-beta</fullName>
    </alternativeName>
</protein>
<comment type="function">
    <text evidence="1">Cytochrome c oxidase is the component of the respiratory chain that catalyzes the reduction of oxygen to water. Subunits 1-3 form the functional core of the enzyme complex. CO I is the catalytic subunit of the enzyme. Electrons originating in cytochrome c are transferred via the copper A center of subunit 2 and heme A of subunit 1 to the bimetallic center formed by heme A3 and copper B (By similarity).</text>
</comment>
<comment type="catalytic activity">
    <reaction>
        <text>4 Fe(II)-[cytochrome c] + O2 + 8 H(+)(in) = 4 Fe(III)-[cytochrome c] + 2 H2O + 4 H(+)(out)</text>
        <dbReference type="Rhea" id="RHEA:11436"/>
        <dbReference type="Rhea" id="RHEA-COMP:10350"/>
        <dbReference type="Rhea" id="RHEA-COMP:14399"/>
        <dbReference type="ChEBI" id="CHEBI:15377"/>
        <dbReference type="ChEBI" id="CHEBI:15378"/>
        <dbReference type="ChEBI" id="CHEBI:15379"/>
        <dbReference type="ChEBI" id="CHEBI:29033"/>
        <dbReference type="ChEBI" id="CHEBI:29034"/>
        <dbReference type="EC" id="7.1.1.9"/>
    </reaction>
</comment>
<comment type="cofactor">
    <cofactor evidence="1">
        <name>Cu(2+)</name>
        <dbReference type="ChEBI" id="CHEBI:29036"/>
    </cofactor>
    <text evidence="1">Binds 1 copper B ion per subunit.</text>
</comment>
<comment type="cofactor">
    <cofactor evidence="1">
        <name>heme</name>
        <dbReference type="ChEBI" id="CHEBI:30413"/>
    </cofactor>
    <text evidence="1">Binds 2 heme groups per subunit.</text>
</comment>
<comment type="pathway">
    <text>Energy metabolism; oxidative phosphorylation.</text>
</comment>
<comment type="subunit">
    <text evidence="1">Associates with subunits II, III and IV to form cytochrome c oxidase.</text>
</comment>
<comment type="subcellular location">
    <subcellularLocation>
        <location evidence="1">Cell membrane</location>
        <topology evidence="1">Multi-pass membrane protein</topology>
    </subcellularLocation>
</comment>
<comment type="similarity">
    <text evidence="4">Belongs to the heme-copper respiratory oxidase family.</text>
</comment>
<sequence length="588" mass="64932">MTATPAQRRPALPATRPYPARHGPKGSYLRKMVTTTDPKDLGVLYLVSATGFFLIGGLLALLMRGELARPGLQFLSAEQYNQLFTMHGTIMLLFYATPVVFGFANAVLPLQIGAPDVAFPRLNAFSYWLYLFGATMATAGFLTPGGAADFGWTAYTPLSLSEHSPGVGADLWILGLAVSGLGTILGAVNMITTVVCLRAPGMTMFRMPIFTWNILITSILVLLAFPILTAALMALAYDRHLGGHIYDPANGGAILYQHLFWFFGHPEVYIIALPFFGIISEVIPVFSRKPIFGYTALVYATLAIAALSMAVWAHHMYATGAVLLPFFSMMTFLIAVPTGVKFFNWIGTMWKGQITFETPMLFAIGFIVTFLLGGLSGVILASPPLDWHVTDSYFVVAHFHYVLFGTIVFATFAGIYFWFPKLTGRFMDERLGRLHFWTTFLGFHLTFLVQHWLGNEGMPRRYADYLPSDGFTGLNTVSTIGSFLLGISMVTFVWNGFKSFRYGEVVTVDDPWGAGNSLEWATTCPPPRHNFYELPRIRSERPAFELHYPHMAERMRAEAHAGRRAGHGAGAELSVPSTVATKDDDHTS</sequence>
<gene>
    <name type="primary">ctaD2</name>
    <name type="ordered locus">NFA_11940</name>
</gene>
<feature type="chain" id="PRO_0000183446" description="Probable cytochrome c oxidase subunit 1-beta">
    <location>
        <begin position="1"/>
        <end position="588"/>
    </location>
</feature>
<feature type="transmembrane region" description="Helical" evidence="2">
    <location>
        <begin position="43"/>
        <end position="63"/>
    </location>
</feature>
<feature type="transmembrane region" description="Helical" evidence="2">
    <location>
        <begin position="90"/>
        <end position="110"/>
    </location>
</feature>
<feature type="transmembrane region" description="Helical" evidence="2">
    <location>
        <begin position="128"/>
        <end position="148"/>
    </location>
</feature>
<feature type="transmembrane region" description="Helical" evidence="2">
    <location>
        <begin position="171"/>
        <end position="191"/>
    </location>
</feature>
<feature type="transmembrane region" description="Helical" evidence="2">
    <location>
        <begin position="214"/>
        <end position="234"/>
    </location>
</feature>
<feature type="transmembrane region" description="Helical" evidence="2">
    <location>
        <begin position="259"/>
        <end position="279"/>
    </location>
</feature>
<feature type="transmembrane region" description="Helical" evidence="2">
    <location>
        <begin position="291"/>
        <end position="311"/>
    </location>
</feature>
<feature type="transmembrane region" description="Helical" evidence="2">
    <location>
        <begin position="320"/>
        <end position="340"/>
    </location>
</feature>
<feature type="transmembrane region" description="Helical" evidence="2">
    <location>
        <begin position="360"/>
        <end position="380"/>
    </location>
</feature>
<feature type="transmembrane region" description="Helical" evidence="2">
    <location>
        <begin position="399"/>
        <end position="419"/>
    </location>
</feature>
<feature type="transmembrane region" description="Helical" evidence="2">
    <location>
        <begin position="434"/>
        <end position="454"/>
    </location>
</feature>
<feature type="transmembrane region" description="Helical" evidence="2">
    <location>
        <begin position="477"/>
        <end position="497"/>
    </location>
</feature>
<feature type="region of interest" description="Disordered" evidence="3">
    <location>
        <begin position="1"/>
        <end position="26"/>
    </location>
</feature>
<feature type="region of interest" description="Disordered" evidence="3">
    <location>
        <begin position="557"/>
        <end position="588"/>
    </location>
</feature>
<feature type="binding site" description="axial binding residue" evidence="1">
    <location>
        <position position="87"/>
    </location>
    <ligand>
        <name>Fe(II)-heme a</name>
        <dbReference type="ChEBI" id="CHEBI:61715"/>
    </ligand>
    <ligandPart>
        <name>Fe</name>
        <dbReference type="ChEBI" id="CHEBI:18248"/>
    </ligandPart>
</feature>
<feature type="binding site" evidence="1">
    <location>
        <position position="265"/>
    </location>
    <ligand>
        <name>Cu cation</name>
        <dbReference type="ChEBI" id="CHEBI:23378"/>
        <label>B</label>
    </ligand>
</feature>
<feature type="binding site" evidence="1">
    <location>
        <position position="269"/>
    </location>
    <ligand>
        <name>Cu cation</name>
        <dbReference type="ChEBI" id="CHEBI:23378"/>
        <label>B</label>
    </ligand>
</feature>
<feature type="binding site" evidence="1">
    <location>
        <position position="314"/>
    </location>
    <ligand>
        <name>Cu cation</name>
        <dbReference type="ChEBI" id="CHEBI:23378"/>
        <label>B</label>
    </ligand>
</feature>
<feature type="binding site" evidence="1">
    <location>
        <position position="315"/>
    </location>
    <ligand>
        <name>Cu cation</name>
        <dbReference type="ChEBI" id="CHEBI:23378"/>
        <label>B</label>
    </ligand>
</feature>
<feature type="binding site" description="axial binding residue" evidence="1">
    <location>
        <position position="398"/>
    </location>
    <ligand>
        <name>heme a3</name>
        <dbReference type="ChEBI" id="CHEBI:83282"/>
    </ligand>
    <ligandPart>
        <name>Fe</name>
        <dbReference type="ChEBI" id="CHEBI:18248"/>
    </ligandPart>
</feature>
<feature type="binding site" description="axial binding residue" evidence="1">
    <location>
        <position position="400"/>
    </location>
    <ligand>
        <name>Fe(II)-heme a</name>
        <dbReference type="ChEBI" id="CHEBI:61715"/>
    </ligand>
    <ligandPart>
        <name>Fe</name>
        <dbReference type="ChEBI" id="CHEBI:18248"/>
    </ligandPart>
</feature>
<feature type="cross-link" description="1'-histidyl-3'-tyrosine (His-Tyr)" evidence="1">
    <location>
        <begin position="265"/>
        <end position="269"/>
    </location>
</feature>